<protein>
    <recommendedName>
        <fullName evidence="3">IDS-type sesquiterpene synthase</fullName>
        <shortName evidence="3">NvIDS1</shortName>
        <shortName evidence="3">NvTPS</shortName>
        <ecNumber evidence="2">2.5.1.-</ecNumber>
    </recommendedName>
</protein>
<name>TPS_NEZVI</name>
<evidence type="ECO:0000250" key="1">
    <source>
        <dbReference type="UniProtKB" id="P14324"/>
    </source>
</evidence>
<evidence type="ECO:0000269" key="2">
    <source>
    </source>
</evidence>
<evidence type="ECO:0000303" key="3">
    <source>
    </source>
</evidence>
<evidence type="ECO:0000305" key="4"/>
<feature type="chain" id="PRO_0000455287" description="IDS-type sesquiterpene synthase">
    <location>
        <begin position="1"/>
        <end position="378"/>
    </location>
</feature>
<feature type="short sequence motif" description="DDXXD motif" evidence="4">
    <location>
        <begin position="120"/>
        <end position="124"/>
    </location>
</feature>
<feature type="binding site" evidence="1">
    <location>
        <position position="120"/>
    </location>
    <ligand>
        <name>Mg(2+)</name>
        <dbReference type="ChEBI" id="CHEBI:18420"/>
        <label>1</label>
    </ligand>
</feature>
<feature type="binding site" evidence="1">
    <location>
        <position position="120"/>
    </location>
    <ligand>
        <name>Mg(2+)</name>
        <dbReference type="ChEBI" id="CHEBI:18420"/>
        <label>2</label>
    </ligand>
</feature>
<feature type="binding site" evidence="1">
    <location>
        <position position="124"/>
    </location>
    <ligand>
        <name>Mg(2+)</name>
        <dbReference type="ChEBI" id="CHEBI:18420"/>
        <label>1</label>
    </ligand>
</feature>
<feature type="binding site" evidence="1">
    <location>
        <position position="124"/>
    </location>
    <ligand>
        <name>Mg(2+)</name>
        <dbReference type="ChEBI" id="CHEBI:18420"/>
        <label>2</label>
    </ligand>
</feature>
<dbReference type="EC" id="2.5.1.-" evidence="2"/>
<dbReference type="EMBL" id="MG748543">
    <property type="protein sequence ID" value="AYD76069.1"/>
    <property type="molecule type" value="mRNA"/>
</dbReference>
<dbReference type="SMR" id="A0A386JV86"/>
<dbReference type="OrthoDB" id="10257492at2759"/>
<dbReference type="GO" id="GO:0005737">
    <property type="term" value="C:cytoplasm"/>
    <property type="evidence" value="ECO:0007669"/>
    <property type="project" value="TreeGrafter"/>
</dbReference>
<dbReference type="GO" id="GO:0004337">
    <property type="term" value="F:(2E,6E)-farnesyl diphosphate synthase activity"/>
    <property type="evidence" value="ECO:0007669"/>
    <property type="project" value="TreeGrafter"/>
</dbReference>
<dbReference type="GO" id="GO:0004161">
    <property type="term" value="F:dimethylallyltranstransferase activity"/>
    <property type="evidence" value="ECO:0007669"/>
    <property type="project" value="TreeGrafter"/>
</dbReference>
<dbReference type="GO" id="GO:0046872">
    <property type="term" value="F:metal ion binding"/>
    <property type="evidence" value="ECO:0007669"/>
    <property type="project" value="UniProtKB-KW"/>
</dbReference>
<dbReference type="GO" id="GO:0010334">
    <property type="term" value="F:sesquiterpene synthase activity"/>
    <property type="evidence" value="ECO:0000314"/>
    <property type="project" value="UniProtKB"/>
</dbReference>
<dbReference type="GO" id="GO:0045337">
    <property type="term" value="P:farnesyl diphosphate biosynthetic process"/>
    <property type="evidence" value="ECO:0007669"/>
    <property type="project" value="TreeGrafter"/>
</dbReference>
<dbReference type="GO" id="GO:0042811">
    <property type="term" value="P:pheromone biosynthetic process"/>
    <property type="evidence" value="ECO:0000314"/>
    <property type="project" value="UniProtKB"/>
</dbReference>
<dbReference type="GO" id="GO:0006714">
    <property type="term" value="P:sesquiterpenoid metabolic process"/>
    <property type="evidence" value="ECO:0000314"/>
    <property type="project" value="UniProtKB"/>
</dbReference>
<dbReference type="Gene3D" id="1.10.600.10">
    <property type="entry name" value="Farnesyl Diphosphate Synthase"/>
    <property type="match status" value="1"/>
</dbReference>
<dbReference type="InterPro" id="IPR039702">
    <property type="entry name" value="FPS1-like"/>
</dbReference>
<dbReference type="InterPro" id="IPR008949">
    <property type="entry name" value="Isoprenoid_synthase_dom_sf"/>
</dbReference>
<dbReference type="InterPro" id="IPR000092">
    <property type="entry name" value="Polyprenyl_synt"/>
</dbReference>
<dbReference type="PANTHER" id="PTHR11525:SF0">
    <property type="entry name" value="FARNESYL PYROPHOSPHATE SYNTHASE"/>
    <property type="match status" value="1"/>
</dbReference>
<dbReference type="PANTHER" id="PTHR11525">
    <property type="entry name" value="FARNESYL-PYROPHOSPHATE SYNTHETASE"/>
    <property type="match status" value="1"/>
</dbReference>
<dbReference type="Pfam" id="PF00348">
    <property type="entry name" value="polyprenyl_synt"/>
    <property type="match status" value="1"/>
</dbReference>
<dbReference type="SUPFAM" id="SSF48576">
    <property type="entry name" value="Terpenoid synthases"/>
    <property type="match status" value="1"/>
</dbReference>
<sequence length="378" mass="43223">MAARAPVHLRGFIARVALNKKNLHARHKLDTDIDKYYYTLHNVIIPDFMDMVKEIPGYPERIKKCVAHTTPSYFEGWAFSTELIYKTVADKQHQTERNLEKCRIIRALMDMSYAMAGILDDYVDKGEFRRGKKVWASVCEGGQEAAIYDSIAVTYLMSLMVKRHFGTDPGYSKLIELFNMVPGTAAIGNTLDILDRHDTNYYDDTMWKHSVQNKAANTVFPAATAGLIHAGVLCDDLLDRTSEVFGYTGHLFQVWDDFMEHYAVKEQSGKGAPDTKYNAKTWATLTAMAHFNEAQAKEFKACYGSTDPAKRSRVRELYDEVNLRGLYIDYLRNTYMVVEEKISKIPDPRIQSACRSYMDWLLVEPPQDEEEAESVLNN</sequence>
<keyword id="KW-0414">Isoprene biosynthesis</keyword>
<keyword id="KW-0460">Magnesium</keyword>
<keyword id="KW-0479">Metal-binding</keyword>
<keyword id="KW-0808">Transferase</keyword>
<accession>A0A386JV86</accession>
<comment type="function">
    <text evidence="2">Sesquiterpene alcohol synthase that catalyzes the formation of the pheromone precursor (Z)-alpha-bisabolene from (2Z,6E)-farnesyl diphosphate.</text>
</comment>
<comment type="catalytic activity">
    <reaction evidence="2">
        <text>(2Z,6E)-farnesyl diphosphate = (Z)-alpha-bisabolene + diphosphate</text>
        <dbReference type="Rhea" id="RHEA:68844"/>
        <dbReference type="ChEBI" id="CHEBI:33019"/>
        <dbReference type="ChEBI" id="CHEBI:49241"/>
        <dbReference type="ChEBI" id="CHEBI:162247"/>
    </reaction>
</comment>
<comment type="cofactor">
    <cofactor evidence="1">
        <name>Mg(2+)</name>
        <dbReference type="ChEBI" id="CHEBI:18420"/>
    </cofactor>
    <text evidence="1">Binds 2 Mg(2+) ions per subunit.</text>
</comment>
<comment type="pathway">
    <text evidence="2">Pheromone biosynthesis.</text>
</comment>
<comment type="tissue specificity">
    <text evidence="2">Highly expressed in male epidermal tissue associated with the cuticle of ventral sternites.</text>
</comment>
<comment type="domain">
    <text evidence="4">The Asp-Asp-Xaa-Xaa-Asp/Glu (DDXXD/E) motif is important for the catalytic activity, presumably through binding to Mg(2+).</text>
</comment>
<comment type="similarity">
    <text evidence="4">Belongs to the terpene synthase family.</text>
</comment>
<organism>
    <name type="scientific">Nezara viridula</name>
    <name type="common">Southern green stink bug</name>
    <name type="synonym">Cimex viridulus</name>
    <dbReference type="NCBI Taxonomy" id="85310"/>
    <lineage>
        <taxon>Eukaryota</taxon>
        <taxon>Metazoa</taxon>
        <taxon>Ecdysozoa</taxon>
        <taxon>Arthropoda</taxon>
        <taxon>Hexapoda</taxon>
        <taxon>Insecta</taxon>
        <taxon>Pterygota</taxon>
        <taxon>Neoptera</taxon>
        <taxon>Paraneoptera</taxon>
        <taxon>Hemiptera</taxon>
        <taxon>Heteroptera</taxon>
        <taxon>Panheteroptera</taxon>
        <taxon>Pentatomomorpha</taxon>
        <taxon>Pentatomoidea</taxon>
        <taxon>Pentatomidae</taxon>
        <taxon>Pentatominae</taxon>
        <taxon>Nezara</taxon>
    </lineage>
</organism>
<gene>
    <name evidence="3" type="primary">TPS</name>
</gene>
<reference key="1">
    <citation type="journal article" date="2019" name="J. Chem. Ecol.">
        <title>An IDS-type sesquiterpene synthase produces the pheromone precursor (z)-alpha-bisabolene in Nezara viridula.</title>
        <authorList>
            <person name="Lancaster J."/>
            <person name="Lehner B."/>
            <person name="Khrimian A."/>
            <person name="Muchlinski A."/>
            <person name="Luck K."/>
            <person name="Koellner T.G."/>
            <person name="Weber D.C."/>
            <person name="Gundersen-Rindal D.E."/>
            <person name="Tholl D."/>
        </authorList>
    </citation>
    <scope>NUCLEOTIDE SEQUENCE [MRNA]</scope>
    <scope>FUNCTION</scope>
    <scope>CATALYTIC ACTIVITY</scope>
    <scope>PATHWAY</scope>
    <scope>TISSUE SPECIFICITY</scope>
</reference>
<proteinExistence type="evidence at protein level"/>